<gene>
    <name evidence="3" type="primary">PcEST</name>
    <name type="ORF">Pc15g00720</name>
    <name type="ORF">PCH_Pc15g00720</name>
</gene>
<organism>
    <name type="scientific">Penicillium rubens (strain ATCC 28089 / DSM 1075 / NRRL 1951 / Wisconsin 54-1255)</name>
    <name type="common">Penicillium chrysogenum</name>
    <dbReference type="NCBI Taxonomy" id="500485"/>
    <lineage>
        <taxon>Eukaryota</taxon>
        <taxon>Fungi</taxon>
        <taxon>Dikarya</taxon>
        <taxon>Ascomycota</taxon>
        <taxon>Pezizomycotina</taxon>
        <taxon>Eurotiomycetes</taxon>
        <taxon>Eurotiomycetidae</taxon>
        <taxon>Eurotiales</taxon>
        <taxon>Aspergillaceae</taxon>
        <taxon>Penicillium</taxon>
        <taxon>Penicillium chrysogenum species complex</taxon>
    </lineage>
</organism>
<comment type="function">
    <text evidence="1 2">Esterase that can hydrolyze the side chain of lovastatin to produce monacolin J (PubMed:28619444, PubMed:31839596). Is also able to hydrolyze the side chains of mevastatin and pravastatin, but not simvastatin (PubMed:28619444).</text>
</comment>
<comment type="catalytic activity">
    <reaction evidence="1">
        <text>lovastatin + H2O = monacolin J + (S)-2-methylbutanoate + H(+)</text>
        <dbReference type="Rhea" id="RHEA:62748"/>
        <dbReference type="ChEBI" id="CHEBI:15377"/>
        <dbReference type="ChEBI" id="CHEBI:15378"/>
        <dbReference type="ChEBI" id="CHEBI:40303"/>
        <dbReference type="ChEBI" id="CHEBI:79034"/>
        <dbReference type="ChEBI" id="CHEBI:145932"/>
    </reaction>
    <physiologicalReaction direction="left-to-right" evidence="1">
        <dbReference type="Rhea" id="RHEA:62749"/>
    </physiologicalReaction>
</comment>
<comment type="catalytic activity">
    <reaction evidence="1">
        <text>pravastatin lactone + H2O = pravastatin diol lactone + (S)-2-methylbutanoate + H(+)</text>
        <dbReference type="Rhea" id="RHEA:62752"/>
        <dbReference type="ChEBI" id="CHEBI:15377"/>
        <dbReference type="ChEBI" id="CHEBI:15378"/>
        <dbReference type="ChEBI" id="CHEBI:145931"/>
        <dbReference type="ChEBI" id="CHEBI:145932"/>
        <dbReference type="ChEBI" id="CHEBI:145933"/>
    </reaction>
    <physiologicalReaction direction="left-to-right" evidence="1">
        <dbReference type="Rhea" id="RHEA:62753"/>
    </physiologicalReaction>
</comment>
<comment type="catalytic activity">
    <reaction evidence="1">
        <text>mevastatin + H2O = compactin diol lactone + (S)-2-methylbutanoate + H(+)</text>
        <dbReference type="Rhea" id="RHEA:62744"/>
        <dbReference type="ChEBI" id="CHEBI:15377"/>
        <dbReference type="ChEBI" id="CHEBI:15378"/>
        <dbReference type="ChEBI" id="CHEBI:34652"/>
        <dbReference type="ChEBI" id="CHEBI:34848"/>
        <dbReference type="ChEBI" id="CHEBI:145932"/>
    </reaction>
    <physiologicalReaction direction="left-to-right" evidence="1">
        <dbReference type="Rhea" id="RHEA:62745"/>
    </physiologicalReaction>
</comment>
<comment type="biophysicochemical properties">
    <kinetics>
        <KM evidence="1">39.4 uM for lovastatin (at 37 degrees Celsius)</KM>
        <KM evidence="2">5.46 uM for lovastatin (at 30 degrees Celsius)</KM>
    </kinetics>
</comment>
<comment type="biotechnology">
    <text evidence="1 2">PcEST can be used to directly produce monacolin J through single-step fermentation, which would be easily applied to industrial production with the existing equipment and fermentation process of lovastatin production and beneficial for the current simvastatin industry and hypercholesterolemia market.</text>
</comment>
<comment type="similarity">
    <text evidence="4">Belongs to the class-A beta-lactamase family.</text>
</comment>
<evidence type="ECO:0000269" key="1">
    <source>
    </source>
</evidence>
<evidence type="ECO:0000269" key="2">
    <source>
    </source>
</evidence>
<evidence type="ECO:0000303" key="3">
    <source>
    </source>
</evidence>
<evidence type="ECO:0000305" key="4"/>
<evidence type="ECO:0007744" key="5">
    <source>
        <dbReference type="PDB" id="6KJC"/>
    </source>
</evidence>
<evidence type="ECO:0007744" key="6">
    <source>
        <dbReference type="PDB" id="6KJD"/>
    </source>
</evidence>
<evidence type="ECO:0007744" key="7">
    <source>
        <dbReference type="PDB" id="6KJE"/>
    </source>
</evidence>
<evidence type="ECO:0007744" key="8">
    <source>
        <dbReference type="PDB" id="6KJF"/>
    </source>
</evidence>
<evidence type="ECO:0007829" key="9">
    <source>
        <dbReference type="PDB" id="6KJC"/>
    </source>
</evidence>
<evidence type="ECO:0007829" key="10">
    <source>
        <dbReference type="PDB" id="6KJD"/>
    </source>
</evidence>
<sequence length="399" mass="43292">MDTTFQAAIDTGKINGAVVCATDAQGHFVYNKATGERTLLSGEKQPQQLDDVLYLASATKLITTIAALQCVEDGLLSLDGDLSSIAPELAAKYVLTGFTDDESPLDDPPARPITLKMLLTHSSGTSYHFLDPSIAKWRAQYANPENEKPRLVEEMFTYPLSFQPGTGWMYGPGLDWAGRVVERVTGGTLMEFMQKRIFDPLGITDSQFYPVTREDLRARLVDLNPSDPGALGSAVIGGGGEMNLRGRGAFGGHGLFLTGLDFVKILRSLLANDGMLLKPAAVDNMFQQHLGPEAAASHRAALASPLGPFFRVGTDPETKVGYGLGGLLTLEDVDGWYGERTLTWGGGLTLTWFIDRKNNLCGVGAIQAVLPVDGDLMADLKQTFRHDIYRKYSAWKGQQ</sequence>
<keyword id="KW-0002">3D-structure</keyword>
<keyword id="KW-0378">Hydrolase</keyword>
<keyword id="KW-1185">Reference proteome</keyword>
<feature type="chain" id="PRO_0000449866" description="Lovastatin esterase">
    <location>
        <begin position="1"/>
        <end position="399"/>
    </location>
</feature>
<feature type="active site" description="Nucleophile" evidence="2">
    <location>
        <position position="57"/>
    </location>
</feature>
<feature type="active site" description="Proton acceptor" evidence="2">
    <location>
        <position position="60"/>
    </location>
</feature>
<feature type="active site" description="Proton acceptor" evidence="2">
    <location>
        <position position="170"/>
    </location>
</feature>
<feature type="mutagenesis site" description="Abolishes the catalytic activity." evidence="2">
    <original>S</original>
    <variation>A</variation>
    <location>
        <position position="57"/>
    </location>
</feature>
<feature type="mutagenesis site" description="Abolishes the catalytic activity." evidence="2">
    <original>K</original>
    <variation>A</variation>
    <variation>H</variation>
    <variation>Q</variation>
    <variation>R</variation>
    <variation>S</variation>
    <location>
        <position position="60"/>
    </location>
</feature>
<feature type="mutagenesis site" description="Leads to improved solubility and thermostability." evidence="2">
    <original>D</original>
    <variation>A</variation>
    <location>
        <position position="106"/>
    </location>
</feature>
<feature type="mutagenesis site" description="Abolishes the catalytic activity." evidence="2">
    <original>Y</original>
    <variation>A</variation>
    <location>
        <position position="127"/>
    </location>
</feature>
<feature type="mutagenesis site" description="Abolishes the catalytic activity." evidence="2">
    <original>Y</original>
    <variation>A</variation>
    <variation>E</variation>
    <variation>F</variation>
    <variation>H</variation>
    <location>
        <position position="170"/>
    </location>
</feature>
<feature type="mutagenesis site" description="Decreases the catalytic activity." evidence="2">
    <original>W</original>
    <variation>A</variation>
    <location>
        <position position="344"/>
    </location>
</feature>
<feature type="mutagenesis site" description="Abolishes the catalytic activity." evidence="2">
    <original>W</original>
    <variation>K</variation>
    <location>
        <position position="344"/>
    </location>
</feature>
<feature type="helix" evidence="9">
    <location>
        <begin position="1"/>
        <end position="10"/>
    </location>
</feature>
<feature type="strand" evidence="9">
    <location>
        <begin position="13"/>
        <end position="22"/>
    </location>
</feature>
<feature type="strand" evidence="9">
    <location>
        <begin position="26"/>
        <end position="38"/>
    </location>
</feature>
<feature type="strand" evidence="9">
    <location>
        <begin position="44"/>
        <end position="46"/>
    </location>
</feature>
<feature type="strand" evidence="9">
    <location>
        <begin position="52"/>
        <end position="54"/>
    </location>
</feature>
<feature type="helix" evidence="9">
    <location>
        <begin position="56"/>
        <end position="58"/>
    </location>
</feature>
<feature type="helix" evidence="9">
    <location>
        <begin position="59"/>
        <end position="72"/>
    </location>
</feature>
<feature type="strand" evidence="9">
    <location>
        <begin position="78"/>
        <end position="80"/>
    </location>
</feature>
<feature type="turn" evidence="9">
    <location>
        <begin position="83"/>
        <end position="85"/>
    </location>
</feature>
<feature type="helix" evidence="9">
    <location>
        <begin position="87"/>
        <end position="90"/>
    </location>
</feature>
<feature type="strand" evidence="10">
    <location>
        <begin position="94"/>
        <end position="98"/>
    </location>
</feature>
<feature type="strand" evidence="10">
    <location>
        <begin position="104"/>
        <end position="107"/>
    </location>
</feature>
<feature type="helix" evidence="9">
    <location>
        <begin position="115"/>
        <end position="119"/>
    </location>
</feature>
<feature type="helix" evidence="9">
    <location>
        <begin position="128"/>
        <end position="130"/>
    </location>
</feature>
<feature type="helix" evidence="9">
    <location>
        <begin position="132"/>
        <end position="140"/>
    </location>
</feature>
<feature type="helix" evidence="9">
    <location>
        <begin position="152"/>
        <end position="155"/>
    </location>
</feature>
<feature type="strand" evidence="9">
    <location>
        <begin position="160"/>
        <end position="162"/>
    </location>
</feature>
<feature type="helix" evidence="9">
    <location>
        <begin position="173"/>
        <end position="185"/>
    </location>
</feature>
<feature type="helix" evidence="9">
    <location>
        <begin position="189"/>
        <end position="196"/>
    </location>
</feature>
<feature type="turn" evidence="9">
    <location>
        <begin position="197"/>
        <end position="202"/>
    </location>
</feature>
<feature type="strand" evidence="9">
    <location>
        <begin position="207"/>
        <end position="210"/>
    </location>
</feature>
<feature type="helix" evidence="9">
    <location>
        <begin position="214"/>
        <end position="217"/>
    </location>
</feature>
<feature type="helix" evidence="9">
    <location>
        <begin position="233"/>
        <end position="236"/>
    </location>
</feature>
<feature type="turn" evidence="9">
    <location>
        <begin position="242"/>
        <end position="245"/>
    </location>
</feature>
<feature type="turn" evidence="9">
    <location>
        <begin position="251"/>
        <end position="253"/>
    </location>
</feature>
<feature type="strand" evidence="9">
    <location>
        <begin position="255"/>
        <end position="258"/>
    </location>
</feature>
<feature type="helix" evidence="9">
    <location>
        <begin position="259"/>
        <end position="271"/>
    </location>
</feature>
<feature type="strand" evidence="9">
    <location>
        <begin position="274"/>
        <end position="277"/>
    </location>
</feature>
<feature type="helix" evidence="9">
    <location>
        <begin position="279"/>
        <end position="285"/>
    </location>
</feature>
<feature type="helix" evidence="9">
    <location>
        <begin position="292"/>
        <end position="303"/>
    </location>
</feature>
<feature type="helix" evidence="9">
    <location>
        <begin position="307"/>
        <end position="311"/>
    </location>
</feature>
<feature type="strand" evidence="9">
    <location>
        <begin position="320"/>
        <end position="322"/>
    </location>
</feature>
<feature type="strand" evidence="9">
    <location>
        <begin position="324"/>
        <end position="329"/>
    </location>
</feature>
<feature type="strand" evidence="9">
    <location>
        <begin position="341"/>
        <end position="346"/>
    </location>
</feature>
<feature type="turn" evidence="9">
    <location>
        <begin position="347"/>
        <end position="349"/>
    </location>
</feature>
<feature type="strand" evidence="9">
    <location>
        <begin position="350"/>
        <end position="355"/>
    </location>
</feature>
<feature type="turn" evidence="9">
    <location>
        <begin position="356"/>
        <end position="359"/>
    </location>
</feature>
<feature type="strand" evidence="9">
    <location>
        <begin position="360"/>
        <end position="368"/>
    </location>
</feature>
<feature type="helix" evidence="9">
    <location>
        <begin position="374"/>
        <end position="396"/>
    </location>
</feature>
<proteinExistence type="evidence at protein level"/>
<protein>
    <recommendedName>
        <fullName evidence="3">Lovastatin esterase</fullName>
        <shortName evidence="3">PcEST</shortName>
        <ecNumber evidence="1">3.1.1.-</ecNumber>
    </recommendedName>
</protein>
<accession>B6H6L7</accession>
<reference key="1">
    <citation type="journal article" date="2008" name="Nat. Biotechnol.">
        <title>Genome sequencing and analysis of the filamentous fungus Penicillium chrysogenum.</title>
        <authorList>
            <person name="van den Berg M.A."/>
            <person name="Albang R."/>
            <person name="Albermann K."/>
            <person name="Badger J.H."/>
            <person name="Daran J.-M."/>
            <person name="Driessen A.J.M."/>
            <person name="Garcia-Estrada C."/>
            <person name="Fedorova N.D."/>
            <person name="Harris D.M."/>
            <person name="Heijne W.H.M."/>
            <person name="Joardar V.S."/>
            <person name="Kiel J.A.K.W."/>
            <person name="Kovalchuk A."/>
            <person name="Martin J.F."/>
            <person name="Nierman W.C."/>
            <person name="Nijland J.G."/>
            <person name="Pronk J.T."/>
            <person name="Roubos J.A."/>
            <person name="van der Klei I.J."/>
            <person name="van Peij N.N.M.E."/>
            <person name="Veenhuis M."/>
            <person name="von Doehren H."/>
            <person name="Wagner C."/>
            <person name="Wortman J.R."/>
            <person name="Bovenberg R.A.L."/>
        </authorList>
    </citation>
    <scope>NUCLEOTIDE SEQUENCE [LARGE SCALE GENOMIC DNA]</scope>
    <source>
        <strain>ATCC 28089 / DSM 1075 / NRRL 1951 / Wisconsin 54-1255</strain>
    </source>
</reference>
<reference key="2">
    <citation type="journal article" date="2017" name="Metab. Eng.">
        <title>Single-step production of the simvastatin precursor monacolin J by engineering of an industrial strain of Aspergillus terreus.</title>
        <authorList>
            <person name="Huang X."/>
            <person name="Liang Y."/>
            <person name="Yang Y."/>
            <person name="Lu X."/>
        </authorList>
    </citation>
    <scope>FUNCTION</scope>
    <scope>SUBSTRATE SPECIFICITY</scope>
    <scope>CATALYTIC ACTIVITY</scope>
    <scope>BIOPHYSICOCHEMICAL PROPERTIES</scope>
    <scope>BIOTECHNOLOGY</scope>
</reference>
<reference evidence="5 6 7 8" key="3">
    <citation type="journal article" date="2020" name="J. Biol. Chem.">
        <title>Structural insights into the catalytic mechanism of lovastatin hydrolase.</title>
        <authorList>
            <person name="Liang Y."/>
            <person name="Lu X."/>
        </authorList>
    </citation>
    <scope>X-RAY CRYSTALLOGRAPHY (2.3 ANGSTROMS) OF IN COMPLEX WITH SUBSTRATE</scope>
    <scope>FUNCTION</scope>
    <scope>SUBSTRATE SPECIFICITY</scope>
    <scope>CATALYTIC ACTIVITY</scope>
    <scope>BIOPHYSICOCHEMICAL PROPERTIES</scope>
    <scope>ACTIVE SITE</scope>
    <scope>MUTAGENESIS OF SER-57; LYS-60; ASP-106; TYR-127; TYR-170 AND TRP-344</scope>
    <scope>BIOTECHNOLOGY</scope>
</reference>
<dbReference type="EC" id="3.1.1.-" evidence="1"/>
<dbReference type="EMBL" id="AM920430">
    <property type="protein sequence ID" value="CAP82958.1"/>
    <property type="molecule type" value="Genomic_DNA"/>
</dbReference>
<dbReference type="RefSeq" id="XP_002560298.1">
    <property type="nucleotide sequence ID" value="XM_002560252.1"/>
</dbReference>
<dbReference type="PDB" id="6KJC">
    <property type="method" value="X-ray"/>
    <property type="resolution" value="2.30 A"/>
    <property type="chains" value="A/B=1-399"/>
</dbReference>
<dbReference type="PDB" id="6KJD">
    <property type="method" value="X-ray"/>
    <property type="resolution" value="2.30 A"/>
    <property type="chains" value="A/B=1-399"/>
</dbReference>
<dbReference type="PDB" id="6KJE">
    <property type="method" value="X-ray"/>
    <property type="resolution" value="2.48 A"/>
    <property type="chains" value="A/B=1-399"/>
</dbReference>
<dbReference type="PDB" id="6KJF">
    <property type="method" value="X-ray"/>
    <property type="resolution" value="2.40 A"/>
    <property type="chains" value="A/B=1-399"/>
</dbReference>
<dbReference type="PDBsum" id="6KJC"/>
<dbReference type="PDBsum" id="6KJD"/>
<dbReference type="PDBsum" id="6KJE"/>
<dbReference type="PDBsum" id="6KJF"/>
<dbReference type="SMR" id="B6H6L7"/>
<dbReference type="STRING" id="500485.B6H6L7"/>
<dbReference type="MEROPS" id="S12.950"/>
<dbReference type="GeneID" id="8309482"/>
<dbReference type="KEGG" id="pcs:N7525_010014"/>
<dbReference type="VEuPathDB" id="FungiDB:PCH_Pc15g00720"/>
<dbReference type="eggNOG" id="ENOG502S4UR">
    <property type="taxonomic scope" value="Eukaryota"/>
</dbReference>
<dbReference type="HOGENOM" id="CLU_020027_11_1_1"/>
<dbReference type="OMA" id="INGAVIC"/>
<dbReference type="OrthoDB" id="428260at2759"/>
<dbReference type="BioCyc" id="PCHR:PC15G00720-MONOMER"/>
<dbReference type="SABIO-RK" id="B6H6L7"/>
<dbReference type="Proteomes" id="UP000000724">
    <property type="component" value="Contig Pc00c15"/>
</dbReference>
<dbReference type="GO" id="GO:0016787">
    <property type="term" value="F:hydrolase activity"/>
    <property type="evidence" value="ECO:0007669"/>
    <property type="project" value="UniProtKB-KW"/>
</dbReference>
<dbReference type="Gene3D" id="3.40.710.10">
    <property type="entry name" value="DD-peptidase/beta-lactamase superfamily"/>
    <property type="match status" value="1"/>
</dbReference>
<dbReference type="InterPro" id="IPR001466">
    <property type="entry name" value="Beta-lactam-related"/>
</dbReference>
<dbReference type="InterPro" id="IPR012338">
    <property type="entry name" value="Beta-lactam/transpept-like"/>
</dbReference>
<dbReference type="InterPro" id="IPR050789">
    <property type="entry name" value="Diverse_Enzym_Activities"/>
</dbReference>
<dbReference type="PANTHER" id="PTHR43283:SF17">
    <property type="entry name" value="(LOVD), PUTATIVE (AFU_ORTHOLOGUE AFUA_5G00920)-RELATED"/>
    <property type="match status" value="1"/>
</dbReference>
<dbReference type="PANTHER" id="PTHR43283">
    <property type="entry name" value="BETA-LACTAMASE-RELATED"/>
    <property type="match status" value="1"/>
</dbReference>
<dbReference type="Pfam" id="PF00144">
    <property type="entry name" value="Beta-lactamase"/>
    <property type="match status" value="1"/>
</dbReference>
<dbReference type="SUPFAM" id="SSF56601">
    <property type="entry name" value="beta-lactamase/transpeptidase-like"/>
    <property type="match status" value="1"/>
</dbReference>
<name>PCEST_PENRW</name>